<keyword id="KW-0963">Cytoplasm</keyword>
<keyword id="KW-0235">DNA replication</keyword>
<keyword id="KW-0236">DNA replication inhibitor</keyword>
<keyword id="KW-0479">Metal-binding</keyword>
<keyword id="KW-0862">Zinc</keyword>
<accession>C3P9H8</accession>
<reference key="1">
    <citation type="submission" date="2009-04" db="EMBL/GenBank/DDBJ databases">
        <title>Genome sequence of Bacillus anthracis A0248.</title>
        <authorList>
            <person name="Dodson R.J."/>
            <person name="Munk A.C."/>
            <person name="Bruce D."/>
            <person name="Detter C."/>
            <person name="Tapia R."/>
            <person name="Sutton G."/>
            <person name="Sims D."/>
            <person name="Brettin T."/>
        </authorList>
    </citation>
    <scope>NUCLEOTIDE SEQUENCE [LARGE SCALE GENOMIC DNA]</scope>
    <source>
        <strain>A0248</strain>
    </source>
</reference>
<name>YABA_BACAA</name>
<feature type="chain" id="PRO_1000164302" description="Replication initiation control protein YabA">
    <location>
        <begin position="1"/>
        <end position="116"/>
    </location>
</feature>
<feature type="binding site" evidence="1">
    <location>
        <position position="91"/>
    </location>
    <ligand>
        <name>Zn(2+)</name>
        <dbReference type="ChEBI" id="CHEBI:29105"/>
    </ligand>
</feature>
<feature type="binding site" evidence="1">
    <location>
        <position position="93"/>
    </location>
    <ligand>
        <name>Zn(2+)</name>
        <dbReference type="ChEBI" id="CHEBI:29105"/>
    </ligand>
</feature>
<feature type="binding site" evidence="1">
    <location>
        <position position="106"/>
    </location>
    <ligand>
        <name>Zn(2+)</name>
        <dbReference type="ChEBI" id="CHEBI:29105"/>
    </ligand>
</feature>
<feature type="binding site" evidence="1">
    <location>
        <position position="109"/>
    </location>
    <ligand>
        <name>Zn(2+)</name>
        <dbReference type="ChEBI" id="CHEBI:29105"/>
    </ligand>
</feature>
<organism>
    <name type="scientific">Bacillus anthracis (strain A0248)</name>
    <dbReference type="NCBI Taxonomy" id="592021"/>
    <lineage>
        <taxon>Bacteria</taxon>
        <taxon>Bacillati</taxon>
        <taxon>Bacillota</taxon>
        <taxon>Bacilli</taxon>
        <taxon>Bacillales</taxon>
        <taxon>Bacillaceae</taxon>
        <taxon>Bacillus</taxon>
        <taxon>Bacillus cereus group</taxon>
    </lineage>
</organism>
<evidence type="ECO:0000255" key="1">
    <source>
        <dbReference type="HAMAP-Rule" id="MF_01159"/>
    </source>
</evidence>
<proteinExistence type="inferred from homology"/>
<sequence>MEKKDIFASVSSMEEQIGHLYKQLGELKQHLAELLEENQHIKMENENLRHRFEEVQIKEKQKTQKRKEVKPKTDIGEGYDNLARLYQEGFHICNLHYGSVRKEGDCLFCLSFLNKK</sequence>
<dbReference type="EMBL" id="CP001598">
    <property type="protein sequence ID" value="ACQ46357.1"/>
    <property type="molecule type" value="Genomic_DNA"/>
</dbReference>
<dbReference type="RefSeq" id="WP_000412056.1">
    <property type="nucleotide sequence ID" value="NC_012659.1"/>
</dbReference>
<dbReference type="SMR" id="C3P9H8"/>
<dbReference type="GeneID" id="93011037"/>
<dbReference type="KEGG" id="bai:BAA_0042"/>
<dbReference type="HOGENOM" id="CLU_157169_0_0_9"/>
<dbReference type="GO" id="GO:0009295">
    <property type="term" value="C:nucleoid"/>
    <property type="evidence" value="ECO:0007669"/>
    <property type="project" value="UniProtKB-SubCell"/>
</dbReference>
<dbReference type="GO" id="GO:0006260">
    <property type="term" value="P:DNA replication"/>
    <property type="evidence" value="ECO:0007669"/>
    <property type="project" value="UniProtKB-UniRule"/>
</dbReference>
<dbReference type="Gene3D" id="1.20.5.1160">
    <property type="entry name" value="Vasodilator-stimulated phosphoprotein"/>
    <property type="match status" value="1"/>
</dbReference>
<dbReference type="HAMAP" id="MF_01159">
    <property type="entry name" value="YabA"/>
    <property type="match status" value="1"/>
</dbReference>
<dbReference type="InterPro" id="IPR010377">
    <property type="entry name" value="YabA"/>
</dbReference>
<dbReference type="NCBIfam" id="NF009644">
    <property type="entry name" value="PRK13169.1-5"/>
    <property type="match status" value="1"/>
</dbReference>
<dbReference type="Pfam" id="PF06156">
    <property type="entry name" value="YabA"/>
    <property type="match status" value="1"/>
</dbReference>
<dbReference type="PIRSF" id="PIRSF021439">
    <property type="entry name" value="DUF972"/>
    <property type="match status" value="1"/>
</dbReference>
<gene>
    <name evidence="1" type="primary">yabA</name>
    <name type="ordered locus">BAA_0042</name>
</gene>
<protein>
    <recommendedName>
        <fullName evidence="1">Replication initiation control protein YabA</fullName>
    </recommendedName>
</protein>
<comment type="function">
    <text evidence="1">Involved in control of chromosome replication initiation. Inhibits the cooperative binding of DnaA to the oriC region, thus negatively regulating initiation of chromosome replication. Inhibits the ability of DnaA-ATP to form a helix on DNA; does not disassemble preformed DnaA-DNA helices. Decreases the residence time of DnaA on the chromosome at its binding sites (oriC, replication forks and promoter-binding sites). Tethers DnaA to the replication machinery via the DNA polymerase beta sliding clamp subunit (dnaN). Associates with oriC and other DnaA targets on the chromosome in a DnaA-dependent manner.</text>
</comment>
<comment type="cofactor">
    <cofactor evidence="1">
        <name>Zn(2+)</name>
        <dbReference type="ChEBI" id="CHEBI:29105"/>
    </cofactor>
    <text evidence="1">Binds 1 zinc ion per subunit.</text>
</comment>
<comment type="subunit">
    <text evidence="1">Homotetramer. Interacts with both DnaA and DnaN, acting as a bridge between these two proteins.</text>
</comment>
<comment type="subcellular location">
    <subcellularLocation>
        <location evidence="1">Cytoplasm</location>
        <location evidence="1">Nucleoid</location>
    </subcellularLocation>
    <text evidence="1">Localizes in tight foci, which correspond to the replisome at mid-cell throughout the cell cycle.</text>
</comment>
<comment type="similarity">
    <text evidence="1">Belongs to the YabA family.</text>
</comment>